<gene>
    <name type="primary">MT-CYB</name>
    <name type="synonym">COB</name>
    <name type="synonym">CYTB</name>
    <name type="synonym">MTCYB</name>
</gene>
<reference key="1">
    <citation type="journal article" date="1996" name="Mol. Phylogenet. Evol.">
        <title>The simultaneous diversification of South American echimyid rodents (Hystricognathi) based on complete cytochrome b sequences.</title>
        <authorList>
            <person name="Lara M.C."/>
            <person name="Patton J.L."/>
            <person name="da Silva M.N.F."/>
        </authorList>
    </citation>
    <scope>NUCLEOTIDE SEQUENCE [GENOMIC DNA]</scope>
</reference>
<comment type="function">
    <text evidence="2">Component of the ubiquinol-cytochrome c reductase complex (complex III or cytochrome b-c1 complex) that is part of the mitochondrial respiratory chain. The b-c1 complex mediates electron transfer from ubiquinol to cytochrome c. Contributes to the generation of a proton gradient across the mitochondrial membrane that is then used for ATP synthesis.</text>
</comment>
<comment type="cofactor">
    <cofactor evidence="2">
        <name>heme b</name>
        <dbReference type="ChEBI" id="CHEBI:60344"/>
    </cofactor>
    <text evidence="2">Binds 2 heme b groups non-covalently.</text>
</comment>
<comment type="subunit">
    <text evidence="2">The cytochrome bc1 complex contains 11 subunits: 3 respiratory subunits (MT-CYB, CYC1 and UQCRFS1), 2 core proteins (UQCRC1 and UQCRC2) and 6 low-molecular weight proteins (UQCRH/QCR6, UQCRB/QCR7, UQCRQ/QCR8, UQCR10/QCR9, UQCR11/QCR10 and a cleavage product of UQCRFS1). This cytochrome bc1 complex then forms a dimer.</text>
</comment>
<comment type="subcellular location">
    <subcellularLocation>
        <location evidence="2">Mitochondrion inner membrane</location>
        <topology evidence="2">Multi-pass membrane protein</topology>
    </subcellularLocation>
</comment>
<comment type="miscellaneous">
    <text evidence="1">Heme 1 (or BL or b562) is low-potential and absorbs at about 562 nm, and heme 2 (or BH or b566) is high-potential and absorbs at about 566 nm.</text>
</comment>
<comment type="similarity">
    <text evidence="3 4">Belongs to the cytochrome b family.</text>
</comment>
<comment type="caution">
    <text evidence="2">The full-length protein contains only eight transmembrane helices, not nine as predicted by bioinformatics tools.</text>
</comment>
<proteinExistence type="inferred from homology"/>
<geneLocation type="mitochondrion"/>
<feature type="chain" id="PRO_0000255031" description="Cytochrome b">
    <location>
        <begin position="1"/>
        <end position="379"/>
    </location>
</feature>
<feature type="transmembrane region" description="Helical" evidence="2">
    <location>
        <begin position="33"/>
        <end position="53"/>
    </location>
</feature>
<feature type="transmembrane region" description="Helical" evidence="2">
    <location>
        <begin position="77"/>
        <end position="98"/>
    </location>
</feature>
<feature type="transmembrane region" description="Helical" evidence="2">
    <location>
        <begin position="113"/>
        <end position="133"/>
    </location>
</feature>
<feature type="transmembrane region" description="Helical" evidence="2">
    <location>
        <begin position="178"/>
        <end position="198"/>
    </location>
</feature>
<feature type="transmembrane region" description="Helical" evidence="2">
    <location>
        <begin position="226"/>
        <end position="246"/>
    </location>
</feature>
<feature type="transmembrane region" description="Helical" evidence="2">
    <location>
        <begin position="288"/>
        <end position="308"/>
    </location>
</feature>
<feature type="transmembrane region" description="Helical" evidence="2">
    <location>
        <begin position="320"/>
        <end position="340"/>
    </location>
</feature>
<feature type="transmembrane region" description="Helical" evidence="2">
    <location>
        <begin position="347"/>
        <end position="367"/>
    </location>
</feature>
<feature type="binding site" description="axial binding residue" evidence="2">
    <location>
        <position position="83"/>
    </location>
    <ligand>
        <name>heme b</name>
        <dbReference type="ChEBI" id="CHEBI:60344"/>
        <label>b562</label>
    </ligand>
    <ligandPart>
        <name>Fe</name>
        <dbReference type="ChEBI" id="CHEBI:18248"/>
    </ligandPart>
</feature>
<feature type="binding site" description="axial binding residue" evidence="2">
    <location>
        <position position="97"/>
    </location>
    <ligand>
        <name>heme b</name>
        <dbReference type="ChEBI" id="CHEBI:60344"/>
        <label>b566</label>
    </ligand>
    <ligandPart>
        <name>Fe</name>
        <dbReference type="ChEBI" id="CHEBI:18248"/>
    </ligandPart>
</feature>
<feature type="binding site" description="axial binding residue" evidence="2">
    <location>
        <position position="182"/>
    </location>
    <ligand>
        <name>heme b</name>
        <dbReference type="ChEBI" id="CHEBI:60344"/>
        <label>b562</label>
    </ligand>
    <ligandPart>
        <name>Fe</name>
        <dbReference type="ChEBI" id="CHEBI:18248"/>
    </ligandPart>
</feature>
<feature type="binding site" description="axial binding residue" evidence="2">
    <location>
        <position position="196"/>
    </location>
    <ligand>
        <name>heme b</name>
        <dbReference type="ChEBI" id="CHEBI:60344"/>
        <label>b566</label>
    </ligand>
    <ligandPart>
        <name>Fe</name>
        <dbReference type="ChEBI" id="CHEBI:18248"/>
    </ligandPart>
</feature>
<feature type="binding site" evidence="2">
    <location>
        <position position="201"/>
    </location>
    <ligand>
        <name>a ubiquinone</name>
        <dbReference type="ChEBI" id="CHEBI:16389"/>
    </ligand>
</feature>
<sequence>MTNMRKSHPLIKIINHSFIDLPAPSNISAWWNFGSLLGVCLALQIITGLFLAMHYTADTTTAFSSVTHICRDVNYGWLIRYAHANGASMFFIFLYFHIGRGIYYGSYTFMETWNIGVLLLFAVMATAFMGYVLPWGQMSFWGATVITNLLSAIPYIGPTLVEWIWGGFSVDKATLTRFFAFHFILPFIITAMVMIHLLFLHETGSNXPSGLNSDXDKIPFHPYYTIKDILGILFMALALLMLTLFSPDLLGDPDNYTPANPLNTPPHIKPEWYFLFAYAVLRSIPNKLGGVLALALSILILMLFPSLHLSKQRSMSFRPLSQCLLWILVANLIILTWIGGQPVEPPFITIGQLASISYFCIILILMPTMSLMENKLLKW</sequence>
<name>CYB_DACDA</name>
<evidence type="ECO:0000250" key="1"/>
<evidence type="ECO:0000250" key="2">
    <source>
        <dbReference type="UniProtKB" id="P00157"/>
    </source>
</evidence>
<evidence type="ECO:0000255" key="3">
    <source>
        <dbReference type="PROSITE-ProRule" id="PRU00967"/>
    </source>
</evidence>
<evidence type="ECO:0000255" key="4">
    <source>
        <dbReference type="PROSITE-ProRule" id="PRU00968"/>
    </source>
</evidence>
<protein>
    <recommendedName>
        <fullName>Cytochrome b</fullName>
    </recommendedName>
    <alternativeName>
        <fullName>Complex III subunit 3</fullName>
    </alternativeName>
    <alternativeName>
        <fullName>Complex III subunit III</fullName>
    </alternativeName>
    <alternativeName>
        <fullName>Cytochrome b-c1 complex subunit 3</fullName>
    </alternativeName>
    <alternativeName>
        <fullName>Ubiquinol-cytochrome-c reductase complex cytochrome b subunit</fullName>
    </alternativeName>
</protein>
<keyword id="KW-0249">Electron transport</keyword>
<keyword id="KW-0349">Heme</keyword>
<keyword id="KW-0408">Iron</keyword>
<keyword id="KW-0472">Membrane</keyword>
<keyword id="KW-0479">Metal-binding</keyword>
<keyword id="KW-0496">Mitochondrion</keyword>
<keyword id="KW-0999">Mitochondrion inner membrane</keyword>
<keyword id="KW-0679">Respiratory chain</keyword>
<keyword id="KW-0812">Transmembrane</keyword>
<keyword id="KW-1133">Transmembrane helix</keyword>
<keyword id="KW-0813">Transport</keyword>
<keyword id="KW-0830">Ubiquinone</keyword>
<accession>Q34306</accession>
<dbReference type="EMBL" id="L23335">
    <property type="protein sequence ID" value="AAC37685.1"/>
    <property type="molecule type" value="Genomic_DNA"/>
</dbReference>
<dbReference type="PIR" id="I48132">
    <property type="entry name" value="I48132"/>
</dbReference>
<dbReference type="GO" id="GO:0005743">
    <property type="term" value="C:mitochondrial inner membrane"/>
    <property type="evidence" value="ECO:0007669"/>
    <property type="project" value="UniProtKB-SubCell"/>
</dbReference>
<dbReference type="GO" id="GO:0045275">
    <property type="term" value="C:respiratory chain complex III"/>
    <property type="evidence" value="ECO:0007669"/>
    <property type="project" value="InterPro"/>
</dbReference>
<dbReference type="GO" id="GO:0046872">
    <property type="term" value="F:metal ion binding"/>
    <property type="evidence" value="ECO:0007669"/>
    <property type="project" value="UniProtKB-KW"/>
</dbReference>
<dbReference type="GO" id="GO:0008121">
    <property type="term" value="F:ubiquinol-cytochrome-c reductase activity"/>
    <property type="evidence" value="ECO:0007669"/>
    <property type="project" value="InterPro"/>
</dbReference>
<dbReference type="GO" id="GO:0006122">
    <property type="term" value="P:mitochondrial electron transport, ubiquinol to cytochrome c"/>
    <property type="evidence" value="ECO:0007669"/>
    <property type="project" value="TreeGrafter"/>
</dbReference>
<dbReference type="CDD" id="cd00290">
    <property type="entry name" value="cytochrome_b_C"/>
    <property type="match status" value="1"/>
</dbReference>
<dbReference type="CDD" id="cd00284">
    <property type="entry name" value="Cytochrome_b_N"/>
    <property type="match status" value="1"/>
</dbReference>
<dbReference type="FunFam" id="1.20.810.10:FF:000002">
    <property type="entry name" value="Cytochrome b"/>
    <property type="match status" value="1"/>
</dbReference>
<dbReference type="Gene3D" id="1.20.810.10">
    <property type="entry name" value="Cytochrome Bc1 Complex, Chain C"/>
    <property type="match status" value="1"/>
</dbReference>
<dbReference type="InterPro" id="IPR005798">
    <property type="entry name" value="Cyt_b/b6_C"/>
</dbReference>
<dbReference type="InterPro" id="IPR036150">
    <property type="entry name" value="Cyt_b/b6_C_sf"/>
</dbReference>
<dbReference type="InterPro" id="IPR005797">
    <property type="entry name" value="Cyt_b/b6_N"/>
</dbReference>
<dbReference type="InterPro" id="IPR027387">
    <property type="entry name" value="Cytb/b6-like_sf"/>
</dbReference>
<dbReference type="InterPro" id="IPR030689">
    <property type="entry name" value="Cytochrome_b"/>
</dbReference>
<dbReference type="InterPro" id="IPR048260">
    <property type="entry name" value="Cytochrome_b_C_euk/bac"/>
</dbReference>
<dbReference type="InterPro" id="IPR048259">
    <property type="entry name" value="Cytochrome_b_N_euk/bac"/>
</dbReference>
<dbReference type="InterPro" id="IPR016174">
    <property type="entry name" value="Di-haem_cyt_TM"/>
</dbReference>
<dbReference type="PANTHER" id="PTHR19271">
    <property type="entry name" value="CYTOCHROME B"/>
    <property type="match status" value="1"/>
</dbReference>
<dbReference type="PANTHER" id="PTHR19271:SF16">
    <property type="entry name" value="CYTOCHROME B"/>
    <property type="match status" value="1"/>
</dbReference>
<dbReference type="Pfam" id="PF00032">
    <property type="entry name" value="Cytochrom_B_C"/>
    <property type="match status" value="1"/>
</dbReference>
<dbReference type="Pfam" id="PF00033">
    <property type="entry name" value="Cytochrome_B"/>
    <property type="match status" value="1"/>
</dbReference>
<dbReference type="PIRSF" id="PIRSF038885">
    <property type="entry name" value="COB"/>
    <property type="match status" value="1"/>
</dbReference>
<dbReference type="SUPFAM" id="SSF81648">
    <property type="entry name" value="a domain/subunit of cytochrome bc1 complex (Ubiquinol-cytochrome c reductase)"/>
    <property type="match status" value="1"/>
</dbReference>
<dbReference type="SUPFAM" id="SSF81342">
    <property type="entry name" value="Transmembrane di-heme cytochromes"/>
    <property type="match status" value="1"/>
</dbReference>
<dbReference type="PROSITE" id="PS51003">
    <property type="entry name" value="CYTB_CTER"/>
    <property type="match status" value="1"/>
</dbReference>
<dbReference type="PROSITE" id="PS51002">
    <property type="entry name" value="CYTB_NTER"/>
    <property type="match status" value="1"/>
</dbReference>
<organism>
    <name type="scientific">Dactylomys dactylinus</name>
    <name type="common">Amazon bamboo rat</name>
    <name type="synonym">Echimys dactylinus</name>
    <dbReference type="NCBI Taxonomy" id="30619"/>
    <lineage>
        <taxon>Eukaryota</taxon>
        <taxon>Metazoa</taxon>
        <taxon>Chordata</taxon>
        <taxon>Craniata</taxon>
        <taxon>Vertebrata</taxon>
        <taxon>Euteleostomi</taxon>
        <taxon>Mammalia</taxon>
        <taxon>Eutheria</taxon>
        <taxon>Euarchontoglires</taxon>
        <taxon>Glires</taxon>
        <taxon>Rodentia</taxon>
        <taxon>Hystricomorpha</taxon>
        <taxon>Echimyidae</taxon>
        <taxon>Dactylomys</taxon>
    </lineage>
</organism>